<protein>
    <recommendedName>
        <fullName evidence="1">Photosystem II CP47 reaction center protein</fullName>
    </recommendedName>
    <alternativeName>
        <fullName evidence="1">PSII 47 kDa protein</fullName>
    </alternativeName>
    <alternativeName>
        <fullName evidence="1">Protein CP-47</fullName>
    </alternativeName>
</protein>
<feature type="chain" id="PRO_0000359808" description="Photosystem II CP47 reaction center protein">
    <location>
        <begin position="1"/>
        <end position="508"/>
    </location>
</feature>
<feature type="transmembrane region" description="Helical" evidence="1">
    <location>
        <begin position="21"/>
        <end position="36"/>
    </location>
</feature>
<feature type="transmembrane region" description="Helical" evidence="1">
    <location>
        <begin position="101"/>
        <end position="115"/>
    </location>
</feature>
<feature type="transmembrane region" description="Helical" evidence="1">
    <location>
        <begin position="140"/>
        <end position="156"/>
    </location>
</feature>
<feature type="transmembrane region" description="Helical" evidence="1">
    <location>
        <begin position="203"/>
        <end position="218"/>
    </location>
</feature>
<feature type="transmembrane region" description="Helical" evidence="1">
    <location>
        <begin position="237"/>
        <end position="252"/>
    </location>
</feature>
<feature type="transmembrane region" description="Helical" evidence="1">
    <location>
        <begin position="457"/>
        <end position="472"/>
    </location>
</feature>
<proteinExistence type="inferred from homology"/>
<sequence length="508" mass="56210">MGLPWFRVHTVVLNDPGRLISVHLMHTALVSGWAGSMAFYELAVFDPSDPVLNPMWRQGMFVLPFMTRLGITKSWGGWNISGESISDPGLWSYEGVAATHIVLSGLLFLASIWHWVYWDLELFRDPRTGKPALDLPKIFGIHLFLSGLLCFGFGAFHVTGLFGPGIWVSDPYGITGRVQPVAPAWGAEGFDPFNPGGIASHHIAAGILGILAGLFHLTVRPPFRLYKALRMGNIETVLSSSIAAVFWAAFVVAGTMWYGSAATPIELFGPTRYQWDLGFFQQEIEKRVQASLAGGASLSEAWSSIPEKLAFYDYIGNNPAKGGLFRAGPMNNGDGIAAGWLGHAVFKDKEGRELFVRRMPTFFETFPVLLLDKDGVVKADVPFRRAESKYSVEQVGVTVTFYGGELDGVTFKDPATVKKYARRAQLGEVFEFDRARLKSDGVFRSSPRGWFTFGHLCFALLFFFGHIWHGARTIFRDVFAGIDPDLDEQVEFGAYQKLGDPSTRKQAV</sequence>
<dbReference type="EMBL" id="DQ422812">
    <property type="protein sequence ID" value="ABD62212.2"/>
    <property type="molecule type" value="Genomic_DNA"/>
</dbReference>
<dbReference type="RefSeq" id="YP_001019073.1">
    <property type="nucleotide sequence ID" value="NC_008822.1"/>
</dbReference>
<dbReference type="SMR" id="Q19VC2"/>
<dbReference type="GeneID" id="4783269"/>
<dbReference type="GO" id="GO:0009535">
    <property type="term" value="C:chloroplast thylakoid membrane"/>
    <property type="evidence" value="ECO:0007669"/>
    <property type="project" value="UniProtKB-SubCell"/>
</dbReference>
<dbReference type="GO" id="GO:0009523">
    <property type="term" value="C:photosystem II"/>
    <property type="evidence" value="ECO:0007669"/>
    <property type="project" value="UniProtKB-KW"/>
</dbReference>
<dbReference type="GO" id="GO:0016168">
    <property type="term" value="F:chlorophyll binding"/>
    <property type="evidence" value="ECO:0007669"/>
    <property type="project" value="UniProtKB-UniRule"/>
</dbReference>
<dbReference type="GO" id="GO:0045156">
    <property type="term" value="F:electron transporter, transferring electrons within the cyclic electron transport pathway of photosynthesis activity"/>
    <property type="evidence" value="ECO:0007669"/>
    <property type="project" value="InterPro"/>
</dbReference>
<dbReference type="GO" id="GO:0009772">
    <property type="term" value="P:photosynthetic electron transport in photosystem II"/>
    <property type="evidence" value="ECO:0007669"/>
    <property type="project" value="InterPro"/>
</dbReference>
<dbReference type="FunFam" id="3.10.680.10:FF:000001">
    <property type="entry name" value="Photosystem II CP47 reaction center protein"/>
    <property type="match status" value="1"/>
</dbReference>
<dbReference type="Gene3D" id="3.10.680.10">
    <property type="entry name" value="Photosystem II CP47 reaction center protein"/>
    <property type="match status" value="1"/>
</dbReference>
<dbReference type="HAMAP" id="MF_01495">
    <property type="entry name" value="PSII_PsbB_CP47"/>
    <property type="match status" value="1"/>
</dbReference>
<dbReference type="InterPro" id="IPR000932">
    <property type="entry name" value="PS_antenna-like"/>
</dbReference>
<dbReference type="InterPro" id="IPR036001">
    <property type="entry name" value="PS_II_antenna-like_sf"/>
</dbReference>
<dbReference type="InterPro" id="IPR017486">
    <property type="entry name" value="PSII_PsbB"/>
</dbReference>
<dbReference type="NCBIfam" id="TIGR03039">
    <property type="entry name" value="PS_II_CP47"/>
    <property type="match status" value="1"/>
</dbReference>
<dbReference type="Pfam" id="PF00421">
    <property type="entry name" value="PSII"/>
    <property type="match status" value="1"/>
</dbReference>
<dbReference type="SUPFAM" id="SSF161077">
    <property type="entry name" value="Photosystem II antenna protein-like"/>
    <property type="match status" value="1"/>
</dbReference>
<geneLocation type="chloroplast"/>
<accession>Q19VC2</accession>
<name>PSBB_CHLAT</name>
<evidence type="ECO:0000255" key="1">
    <source>
        <dbReference type="HAMAP-Rule" id="MF_01495"/>
    </source>
</evidence>
<reference key="1">
    <citation type="journal article" date="2007" name="BMC Biol.">
        <title>A clade uniting the green algae Mesostigma viride and Chlorokybus atmophyticus represents the deepest branch of the Streptophyta in chloroplast genome-based phylogenies.</title>
        <authorList>
            <person name="Lemieux C."/>
            <person name="Otis C."/>
            <person name="Turmel M."/>
        </authorList>
    </citation>
    <scope>NUCLEOTIDE SEQUENCE [LARGE SCALE GENOMIC DNA]</scope>
    <source>
        <strain>SAG 48.80</strain>
    </source>
</reference>
<keyword id="KW-0148">Chlorophyll</keyword>
<keyword id="KW-0150">Chloroplast</keyword>
<keyword id="KW-0157">Chromophore</keyword>
<keyword id="KW-0472">Membrane</keyword>
<keyword id="KW-0602">Photosynthesis</keyword>
<keyword id="KW-0604">Photosystem II</keyword>
<keyword id="KW-0934">Plastid</keyword>
<keyword id="KW-0793">Thylakoid</keyword>
<keyword id="KW-0812">Transmembrane</keyword>
<keyword id="KW-1133">Transmembrane helix</keyword>
<gene>
    <name evidence="1" type="primary">psbB</name>
</gene>
<comment type="function">
    <text evidence="1">One of the components of the core complex of photosystem II (PSII). It binds chlorophyll and helps catalyze the primary light-induced photochemical processes of PSII. PSII is a light-driven water:plastoquinone oxidoreductase, using light energy to abstract electrons from H(2)O, generating O(2) and a proton gradient subsequently used for ATP formation.</text>
</comment>
<comment type="cofactor">
    <text evidence="1">Binds multiple chlorophylls. PSII binds additional chlorophylls, carotenoids and specific lipids.</text>
</comment>
<comment type="subunit">
    <text evidence="1">PSII is composed of 1 copy each of membrane proteins PsbA, PsbB, PsbC, PsbD, PsbE, PsbF, PsbH, PsbI, PsbJ, PsbK, PsbL, PsbM, PsbT, PsbX, PsbY, PsbZ, Psb30/Ycf12, at least 3 peripheral proteins of the oxygen-evolving complex and a large number of cofactors. It forms dimeric complexes.</text>
</comment>
<comment type="subcellular location">
    <subcellularLocation>
        <location evidence="1">Plastid</location>
        <location evidence="1">Chloroplast thylakoid membrane</location>
        <topology evidence="1">Multi-pass membrane protein</topology>
    </subcellularLocation>
</comment>
<comment type="similarity">
    <text evidence="1">Belongs to the PsbB/PsbC family. PsbB subfamily.</text>
</comment>
<organism>
    <name type="scientific">Chlorokybus atmophyticus</name>
    <name type="common">Soil alga</name>
    <dbReference type="NCBI Taxonomy" id="3144"/>
    <lineage>
        <taxon>Eukaryota</taxon>
        <taxon>Viridiplantae</taxon>
        <taxon>Streptophyta</taxon>
        <taxon>Chlorokybophyceae</taxon>
        <taxon>Chlorokybales</taxon>
        <taxon>Chlorokybaceae</taxon>
        <taxon>Chlorokybus</taxon>
    </lineage>
</organism>